<proteinExistence type="inferred from homology"/>
<protein>
    <recommendedName>
        <fullName evidence="1">GTPase Obg</fullName>
        <ecNumber evidence="1">3.6.5.-</ecNumber>
    </recommendedName>
    <alternativeName>
        <fullName evidence="1">GTP-binding protein Obg</fullName>
    </alternativeName>
</protein>
<organism>
    <name type="scientific">Halothermothrix orenii (strain H 168 / OCM 544 / DSM 9562)</name>
    <dbReference type="NCBI Taxonomy" id="373903"/>
    <lineage>
        <taxon>Bacteria</taxon>
        <taxon>Bacillati</taxon>
        <taxon>Bacillota</taxon>
        <taxon>Clostridia</taxon>
        <taxon>Halanaerobiales</taxon>
        <taxon>Halothermotrichaceae</taxon>
        <taxon>Halothermothrix</taxon>
    </lineage>
</organism>
<comment type="function">
    <text evidence="1">An essential GTPase which binds GTP, GDP and possibly (p)ppGpp with moderate affinity, with high nucleotide exchange rates and a fairly low GTP hydrolysis rate. Plays a role in control of the cell cycle, stress response, ribosome biogenesis and in those bacteria that undergo differentiation, in morphogenesis control.</text>
</comment>
<comment type="cofactor">
    <cofactor evidence="1">
        <name>Mg(2+)</name>
        <dbReference type="ChEBI" id="CHEBI:18420"/>
    </cofactor>
</comment>
<comment type="subunit">
    <text evidence="1">Monomer.</text>
</comment>
<comment type="subcellular location">
    <subcellularLocation>
        <location evidence="1">Cytoplasm</location>
    </subcellularLocation>
</comment>
<comment type="similarity">
    <text evidence="1">Belongs to the TRAFAC class OBG-HflX-like GTPase superfamily. OBG GTPase family.</text>
</comment>
<feature type="chain" id="PRO_0000385970" description="GTPase Obg">
    <location>
        <begin position="1"/>
        <end position="426"/>
    </location>
</feature>
<feature type="domain" description="Obg" evidence="3">
    <location>
        <begin position="1"/>
        <end position="158"/>
    </location>
</feature>
<feature type="domain" description="OBG-type G" evidence="1">
    <location>
        <begin position="159"/>
        <end position="330"/>
    </location>
</feature>
<feature type="domain" description="OCT" evidence="2">
    <location>
        <begin position="349"/>
        <end position="426"/>
    </location>
</feature>
<feature type="binding site" evidence="1">
    <location>
        <begin position="165"/>
        <end position="172"/>
    </location>
    <ligand>
        <name>GTP</name>
        <dbReference type="ChEBI" id="CHEBI:37565"/>
    </ligand>
</feature>
<feature type="binding site" evidence="1">
    <location>
        <position position="172"/>
    </location>
    <ligand>
        <name>Mg(2+)</name>
        <dbReference type="ChEBI" id="CHEBI:18420"/>
    </ligand>
</feature>
<feature type="binding site" evidence="1">
    <location>
        <begin position="190"/>
        <end position="194"/>
    </location>
    <ligand>
        <name>GTP</name>
        <dbReference type="ChEBI" id="CHEBI:37565"/>
    </ligand>
</feature>
<feature type="binding site" evidence="1">
    <location>
        <position position="192"/>
    </location>
    <ligand>
        <name>Mg(2+)</name>
        <dbReference type="ChEBI" id="CHEBI:18420"/>
    </ligand>
</feature>
<feature type="binding site" evidence="1">
    <location>
        <begin position="212"/>
        <end position="215"/>
    </location>
    <ligand>
        <name>GTP</name>
        <dbReference type="ChEBI" id="CHEBI:37565"/>
    </ligand>
</feature>
<feature type="binding site" evidence="1">
    <location>
        <begin position="282"/>
        <end position="285"/>
    </location>
    <ligand>
        <name>GTP</name>
        <dbReference type="ChEBI" id="CHEBI:37565"/>
    </ligand>
</feature>
<feature type="binding site" evidence="1">
    <location>
        <begin position="311"/>
        <end position="313"/>
    </location>
    <ligand>
        <name>GTP</name>
        <dbReference type="ChEBI" id="CHEBI:37565"/>
    </ligand>
</feature>
<keyword id="KW-0963">Cytoplasm</keyword>
<keyword id="KW-0342">GTP-binding</keyword>
<keyword id="KW-0378">Hydrolase</keyword>
<keyword id="KW-0460">Magnesium</keyword>
<keyword id="KW-0479">Metal-binding</keyword>
<keyword id="KW-0547">Nucleotide-binding</keyword>
<keyword id="KW-1185">Reference proteome</keyword>
<dbReference type="EC" id="3.6.5.-" evidence="1"/>
<dbReference type="EMBL" id="CP001098">
    <property type="protein sequence ID" value="ACL70159.1"/>
    <property type="molecule type" value="Genomic_DNA"/>
</dbReference>
<dbReference type="RefSeq" id="WP_012636342.1">
    <property type="nucleotide sequence ID" value="NC_011899.1"/>
</dbReference>
<dbReference type="SMR" id="B8CXZ0"/>
<dbReference type="STRING" id="373903.Hore_14100"/>
<dbReference type="KEGG" id="hor:Hore_14100"/>
<dbReference type="eggNOG" id="COG0536">
    <property type="taxonomic scope" value="Bacteria"/>
</dbReference>
<dbReference type="HOGENOM" id="CLU_011747_2_1_9"/>
<dbReference type="OrthoDB" id="9807318at2"/>
<dbReference type="Proteomes" id="UP000000719">
    <property type="component" value="Chromosome"/>
</dbReference>
<dbReference type="GO" id="GO:0005737">
    <property type="term" value="C:cytoplasm"/>
    <property type="evidence" value="ECO:0007669"/>
    <property type="project" value="UniProtKB-SubCell"/>
</dbReference>
<dbReference type="GO" id="GO:0005525">
    <property type="term" value="F:GTP binding"/>
    <property type="evidence" value="ECO:0007669"/>
    <property type="project" value="UniProtKB-UniRule"/>
</dbReference>
<dbReference type="GO" id="GO:0003924">
    <property type="term" value="F:GTPase activity"/>
    <property type="evidence" value="ECO:0007669"/>
    <property type="project" value="UniProtKB-UniRule"/>
</dbReference>
<dbReference type="GO" id="GO:0000287">
    <property type="term" value="F:magnesium ion binding"/>
    <property type="evidence" value="ECO:0007669"/>
    <property type="project" value="InterPro"/>
</dbReference>
<dbReference type="GO" id="GO:0042254">
    <property type="term" value="P:ribosome biogenesis"/>
    <property type="evidence" value="ECO:0007669"/>
    <property type="project" value="UniProtKB-UniRule"/>
</dbReference>
<dbReference type="CDD" id="cd01898">
    <property type="entry name" value="Obg"/>
    <property type="match status" value="1"/>
</dbReference>
<dbReference type="FunFam" id="2.70.210.12:FF:000001">
    <property type="entry name" value="GTPase Obg"/>
    <property type="match status" value="1"/>
</dbReference>
<dbReference type="Gene3D" id="3.30.300.350">
    <property type="entry name" value="GTP-binding protein OBG, C-terminal domain"/>
    <property type="match status" value="1"/>
</dbReference>
<dbReference type="Gene3D" id="2.70.210.12">
    <property type="entry name" value="GTP1/OBG domain"/>
    <property type="match status" value="1"/>
</dbReference>
<dbReference type="Gene3D" id="3.40.50.300">
    <property type="entry name" value="P-loop containing nucleotide triphosphate hydrolases"/>
    <property type="match status" value="1"/>
</dbReference>
<dbReference type="HAMAP" id="MF_01454">
    <property type="entry name" value="GTPase_Obg"/>
    <property type="match status" value="1"/>
</dbReference>
<dbReference type="InterPro" id="IPR031167">
    <property type="entry name" value="G_OBG"/>
</dbReference>
<dbReference type="InterPro" id="IPR006073">
    <property type="entry name" value="GTP-bd"/>
</dbReference>
<dbReference type="InterPro" id="IPR014100">
    <property type="entry name" value="GTP-bd_Obg/CgtA"/>
</dbReference>
<dbReference type="InterPro" id="IPR036346">
    <property type="entry name" value="GTP-bd_prot_GTP1/OBG_C_sf"/>
</dbReference>
<dbReference type="InterPro" id="IPR006074">
    <property type="entry name" value="GTP1-OBG_CS"/>
</dbReference>
<dbReference type="InterPro" id="IPR006169">
    <property type="entry name" value="GTP1_OBG_dom"/>
</dbReference>
<dbReference type="InterPro" id="IPR036726">
    <property type="entry name" value="GTP1_OBG_dom_sf"/>
</dbReference>
<dbReference type="InterPro" id="IPR045086">
    <property type="entry name" value="OBG_GTPase"/>
</dbReference>
<dbReference type="InterPro" id="IPR015349">
    <property type="entry name" value="OCT_dom"/>
</dbReference>
<dbReference type="InterPro" id="IPR027417">
    <property type="entry name" value="P-loop_NTPase"/>
</dbReference>
<dbReference type="NCBIfam" id="TIGR02729">
    <property type="entry name" value="Obg_CgtA"/>
    <property type="match status" value="1"/>
</dbReference>
<dbReference type="NCBIfam" id="TIGR03595">
    <property type="entry name" value="Obg_CgtA_exten"/>
    <property type="match status" value="1"/>
</dbReference>
<dbReference type="NCBIfam" id="NF008954">
    <property type="entry name" value="PRK12296.1"/>
    <property type="match status" value="1"/>
</dbReference>
<dbReference type="NCBIfam" id="NF008955">
    <property type="entry name" value="PRK12297.1"/>
    <property type="match status" value="1"/>
</dbReference>
<dbReference type="NCBIfam" id="NF008956">
    <property type="entry name" value="PRK12299.1"/>
    <property type="match status" value="1"/>
</dbReference>
<dbReference type="PANTHER" id="PTHR11702">
    <property type="entry name" value="DEVELOPMENTALLY REGULATED GTP-BINDING PROTEIN-RELATED"/>
    <property type="match status" value="1"/>
</dbReference>
<dbReference type="PANTHER" id="PTHR11702:SF31">
    <property type="entry name" value="MITOCHONDRIAL RIBOSOME-ASSOCIATED GTPASE 2"/>
    <property type="match status" value="1"/>
</dbReference>
<dbReference type="Pfam" id="PF09269">
    <property type="entry name" value="DUF1967"/>
    <property type="match status" value="1"/>
</dbReference>
<dbReference type="Pfam" id="PF01018">
    <property type="entry name" value="GTP1_OBG"/>
    <property type="match status" value="1"/>
</dbReference>
<dbReference type="Pfam" id="PF01926">
    <property type="entry name" value="MMR_HSR1"/>
    <property type="match status" value="1"/>
</dbReference>
<dbReference type="PIRSF" id="PIRSF002401">
    <property type="entry name" value="GTP_bd_Obg/CgtA"/>
    <property type="match status" value="1"/>
</dbReference>
<dbReference type="PRINTS" id="PR00326">
    <property type="entry name" value="GTP1OBG"/>
</dbReference>
<dbReference type="SUPFAM" id="SSF102741">
    <property type="entry name" value="Obg GTP-binding protein C-terminal domain"/>
    <property type="match status" value="1"/>
</dbReference>
<dbReference type="SUPFAM" id="SSF82051">
    <property type="entry name" value="Obg GTP-binding protein N-terminal domain"/>
    <property type="match status" value="1"/>
</dbReference>
<dbReference type="SUPFAM" id="SSF52540">
    <property type="entry name" value="P-loop containing nucleoside triphosphate hydrolases"/>
    <property type="match status" value="1"/>
</dbReference>
<dbReference type="PROSITE" id="PS51710">
    <property type="entry name" value="G_OBG"/>
    <property type="match status" value="1"/>
</dbReference>
<dbReference type="PROSITE" id="PS00905">
    <property type="entry name" value="GTP1_OBG"/>
    <property type="match status" value="1"/>
</dbReference>
<dbReference type="PROSITE" id="PS51883">
    <property type="entry name" value="OBG"/>
    <property type="match status" value="1"/>
</dbReference>
<dbReference type="PROSITE" id="PS51881">
    <property type="entry name" value="OCT"/>
    <property type="match status" value="1"/>
</dbReference>
<gene>
    <name evidence="1" type="primary">obg</name>
    <name type="ordered locus">Hore_14100</name>
</gene>
<reference key="1">
    <citation type="journal article" date="2009" name="PLoS ONE">
        <title>Genome analysis of the anaerobic thermohalophilic bacterium Halothermothrix orenii.</title>
        <authorList>
            <person name="Mavromatis K."/>
            <person name="Ivanova N."/>
            <person name="Anderson I."/>
            <person name="Lykidis A."/>
            <person name="Hooper S.D."/>
            <person name="Sun H."/>
            <person name="Kunin V."/>
            <person name="Lapidus A."/>
            <person name="Hugenholtz P."/>
            <person name="Patel B."/>
            <person name="Kyrpides N.C."/>
        </authorList>
    </citation>
    <scope>NUCLEOTIDE SEQUENCE [LARGE SCALE GENOMIC DNA]</scope>
    <source>
        <strain>H 168 / OCM 544 / DSM 9562</strain>
    </source>
</reference>
<evidence type="ECO:0000255" key="1">
    <source>
        <dbReference type="HAMAP-Rule" id="MF_01454"/>
    </source>
</evidence>
<evidence type="ECO:0000255" key="2">
    <source>
        <dbReference type="PROSITE-ProRule" id="PRU01229"/>
    </source>
</evidence>
<evidence type="ECO:0000255" key="3">
    <source>
        <dbReference type="PROSITE-ProRule" id="PRU01231"/>
    </source>
</evidence>
<accession>B8CXZ0</accession>
<name>OBG_HALOH</name>
<sequence>MFVDEVEIKVKGGQGGNGVVSFRREKFEPMGGPDGGDGGDGGNVILRVDEGLNTLADFRYQRHYEAERGYHGSGKNKHGRSGEDLVLKVPPGTVVYDADTDELLADLTEDGEEYIVAHGGKGGRGNARFKKSTRKAPRFAEKGEPGEERSIRLELKLVADVGLIGFPNVGKSTLISVVSEARPKIANYHFTTLKPNLGVVALSEYKSFVMADIPGLIEGAHQGVGLGDEFLRHIERTRLLIHIIDISGIEGRDPLEDFKTINRELEKFNEKLSSRPQIVALNKIDLPGARENVERVQPVLEEKGYKVFPISAATKEGVKELIYYTGDLLKELPVERKIAKEDRIVIKPDFADEEENIVVEKKNGIYEVSGRLVEKYVIKTDFNNDAAVKRLLRVLQHHDLNELLRDKGVKNGDTVKIGPMEFEYME</sequence>